<protein>
    <recommendedName>
        <fullName evidence="8">Probable serine/threonine-protein kinase PBL8</fullName>
        <ecNumber evidence="8">2.7.11.1</ecNumber>
    </recommendedName>
    <alternativeName>
        <fullName evidence="6">PBS1-like protein 8</fullName>
    </alternativeName>
</protein>
<sequence length="410" mass="45618">MGNCGTRDEAAVFTPQAQAQQLQKKHSRSVSDLSDPSTPRFRDDSRTPISYAQVIPFTLFELETITKSFRPDYILGEGGFGTVYKGYIDDNLRVGLKSLPVAVKVLNKEGLQGHREWLTEVNFLGQLRHPNLVKLIGYCCEDDHRLLVYEFMLRGSLENHLFRKTTAPLSWSRRMMIALGAAKGLAFLHNAERPVIYRDFKTSNILLDSDYTAKLSDFGLAKAGPQGDETHVSTRVMGTYGYAAPEYVMTGHLTARSDVYSFGVVLLEMLTGRKSVDKTRPSKEQNLVDWARPKLNDKRKLLQIIDPRLENQYSVRAAQKACSLAYYCLSQNPKARPLMSDVVETLEPLQCTGDALIPCATTTAGAAFAMGGVPDYRMHRRFAKNVGPGAICRSPNPNYSPGGPAACRVR</sequence>
<organism>
    <name type="scientific">Arabidopsis thaliana</name>
    <name type="common">Mouse-ear cress</name>
    <dbReference type="NCBI Taxonomy" id="3702"/>
    <lineage>
        <taxon>Eukaryota</taxon>
        <taxon>Viridiplantae</taxon>
        <taxon>Streptophyta</taxon>
        <taxon>Embryophyta</taxon>
        <taxon>Tracheophyta</taxon>
        <taxon>Spermatophyta</taxon>
        <taxon>Magnoliopsida</taxon>
        <taxon>eudicotyledons</taxon>
        <taxon>Gunneridae</taxon>
        <taxon>Pentapetalae</taxon>
        <taxon>rosids</taxon>
        <taxon>malvids</taxon>
        <taxon>Brassicales</taxon>
        <taxon>Brassicaceae</taxon>
        <taxon>Camelineae</taxon>
        <taxon>Arabidopsis</taxon>
    </lineage>
</organism>
<comment type="function">
    <text evidence="1">May be involved in plant defense signaling.</text>
</comment>
<comment type="catalytic activity">
    <reaction evidence="8">
        <text>L-seryl-[protein] + ATP = O-phospho-L-seryl-[protein] + ADP + H(+)</text>
        <dbReference type="Rhea" id="RHEA:17989"/>
        <dbReference type="Rhea" id="RHEA-COMP:9863"/>
        <dbReference type="Rhea" id="RHEA-COMP:11604"/>
        <dbReference type="ChEBI" id="CHEBI:15378"/>
        <dbReference type="ChEBI" id="CHEBI:29999"/>
        <dbReference type="ChEBI" id="CHEBI:30616"/>
        <dbReference type="ChEBI" id="CHEBI:83421"/>
        <dbReference type="ChEBI" id="CHEBI:456216"/>
        <dbReference type="EC" id="2.7.11.1"/>
    </reaction>
</comment>
<comment type="catalytic activity">
    <reaction evidence="8">
        <text>L-threonyl-[protein] + ATP = O-phospho-L-threonyl-[protein] + ADP + H(+)</text>
        <dbReference type="Rhea" id="RHEA:46608"/>
        <dbReference type="Rhea" id="RHEA-COMP:11060"/>
        <dbReference type="Rhea" id="RHEA-COMP:11605"/>
        <dbReference type="ChEBI" id="CHEBI:15378"/>
        <dbReference type="ChEBI" id="CHEBI:30013"/>
        <dbReference type="ChEBI" id="CHEBI:30616"/>
        <dbReference type="ChEBI" id="CHEBI:61977"/>
        <dbReference type="ChEBI" id="CHEBI:456216"/>
        <dbReference type="EC" id="2.7.11.1"/>
    </reaction>
</comment>
<comment type="subunit">
    <text evidence="5">Interacts with the Xanthomonas campestris effector XopAC/AvrAC.</text>
</comment>
<comment type="subcellular location">
    <subcellularLocation>
        <location evidence="1">Cell membrane</location>
        <topology evidence="1">Lipid-anchor</topology>
    </subcellularLocation>
</comment>
<comment type="similarity">
    <text evidence="3">Belongs to the protein kinase superfamily. Ser/Thr protein kinase family.</text>
</comment>
<comment type="sequence caution" evidence="8">
    <conflict type="erroneous gene model prediction">
        <sequence resource="EMBL-CDS" id="CAB99493"/>
    </conflict>
</comment>
<reference key="1">
    <citation type="journal article" date="2000" name="Nature">
        <title>Sequence and analysis of chromosome 5 of the plant Arabidopsis thaliana.</title>
        <authorList>
            <person name="Tabata S."/>
            <person name="Kaneko T."/>
            <person name="Nakamura Y."/>
            <person name="Kotani H."/>
            <person name="Kato T."/>
            <person name="Asamizu E."/>
            <person name="Miyajima N."/>
            <person name="Sasamoto S."/>
            <person name="Kimura T."/>
            <person name="Hosouchi T."/>
            <person name="Kawashima K."/>
            <person name="Kohara M."/>
            <person name="Matsumoto M."/>
            <person name="Matsuno A."/>
            <person name="Muraki A."/>
            <person name="Nakayama S."/>
            <person name="Nakazaki N."/>
            <person name="Naruo K."/>
            <person name="Okumura S."/>
            <person name="Shinpo S."/>
            <person name="Takeuchi C."/>
            <person name="Wada T."/>
            <person name="Watanabe A."/>
            <person name="Yamada M."/>
            <person name="Yasuda M."/>
            <person name="Sato S."/>
            <person name="de la Bastide M."/>
            <person name="Huang E."/>
            <person name="Spiegel L."/>
            <person name="Gnoj L."/>
            <person name="O'Shaughnessy A."/>
            <person name="Preston R."/>
            <person name="Habermann K."/>
            <person name="Murray J."/>
            <person name="Johnson D."/>
            <person name="Rohlfing T."/>
            <person name="Nelson J."/>
            <person name="Stoneking T."/>
            <person name="Pepin K."/>
            <person name="Spieth J."/>
            <person name="Sekhon M."/>
            <person name="Armstrong J."/>
            <person name="Becker M."/>
            <person name="Belter E."/>
            <person name="Cordum H."/>
            <person name="Cordes M."/>
            <person name="Courtney L."/>
            <person name="Courtney W."/>
            <person name="Dante M."/>
            <person name="Du H."/>
            <person name="Edwards J."/>
            <person name="Fryman J."/>
            <person name="Haakensen B."/>
            <person name="Lamar E."/>
            <person name="Latreille P."/>
            <person name="Leonard S."/>
            <person name="Meyer R."/>
            <person name="Mulvaney E."/>
            <person name="Ozersky P."/>
            <person name="Riley A."/>
            <person name="Strowmatt C."/>
            <person name="Wagner-McPherson C."/>
            <person name="Wollam A."/>
            <person name="Yoakum M."/>
            <person name="Bell M."/>
            <person name="Dedhia N."/>
            <person name="Parnell L."/>
            <person name="Shah R."/>
            <person name="Rodriguez M."/>
            <person name="Hoon See L."/>
            <person name="Vil D."/>
            <person name="Baker J."/>
            <person name="Kirchoff K."/>
            <person name="Toth K."/>
            <person name="King L."/>
            <person name="Bahret A."/>
            <person name="Miller B."/>
            <person name="Marra M.A."/>
            <person name="Martienssen R."/>
            <person name="McCombie W.R."/>
            <person name="Wilson R.K."/>
            <person name="Murphy G."/>
            <person name="Bancroft I."/>
            <person name="Volckaert G."/>
            <person name="Wambutt R."/>
            <person name="Duesterhoeft A."/>
            <person name="Stiekema W."/>
            <person name="Pohl T."/>
            <person name="Entian K.-D."/>
            <person name="Terryn N."/>
            <person name="Hartley N."/>
            <person name="Bent E."/>
            <person name="Johnson S."/>
            <person name="Langham S.-A."/>
            <person name="McCullagh B."/>
            <person name="Robben J."/>
            <person name="Grymonprez B."/>
            <person name="Zimmermann W."/>
            <person name="Ramsperger U."/>
            <person name="Wedler H."/>
            <person name="Balke K."/>
            <person name="Wedler E."/>
            <person name="Peters S."/>
            <person name="van Staveren M."/>
            <person name="Dirkse W."/>
            <person name="Mooijman P."/>
            <person name="Klein Lankhorst R."/>
            <person name="Weitzenegger T."/>
            <person name="Bothe G."/>
            <person name="Rose M."/>
            <person name="Hauf J."/>
            <person name="Berneiser S."/>
            <person name="Hempel S."/>
            <person name="Feldpausch M."/>
            <person name="Lamberth S."/>
            <person name="Villarroel R."/>
            <person name="Gielen J."/>
            <person name="Ardiles W."/>
            <person name="Bents O."/>
            <person name="Lemcke K."/>
            <person name="Kolesov G."/>
            <person name="Mayer K.F.X."/>
            <person name="Rudd S."/>
            <person name="Schoof H."/>
            <person name="Schueller C."/>
            <person name="Zaccaria P."/>
            <person name="Mewes H.-W."/>
            <person name="Bevan M."/>
            <person name="Fransz P.F."/>
        </authorList>
    </citation>
    <scope>NUCLEOTIDE SEQUENCE [LARGE SCALE GENOMIC DNA]</scope>
    <source>
        <strain>cv. Columbia</strain>
    </source>
</reference>
<reference key="2">
    <citation type="journal article" date="2017" name="Plant J.">
        <title>Araport11: a complete reannotation of the Arabidopsis thaliana reference genome.</title>
        <authorList>
            <person name="Cheng C.Y."/>
            <person name="Krishnakumar V."/>
            <person name="Chan A.P."/>
            <person name="Thibaud-Nissen F."/>
            <person name="Schobel S."/>
            <person name="Town C.D."/>
        </authorList>
    </citation>
    <scope>GENOME REANNOTATION</scope>
    <source>
        <strain>cv. Columbia</strain>
    </source>
</reference>
<reference key="3">
    <citation type="journal article" date="2002" name="Science">
        <title>Functional annotation of a full-length Arabidopsis cDNA collection.</title>
        <authorList>
            <person name="Seki M."/>
            <person name="Narusaka M."/>
            <person name="Kamiya A."/>
            <person name="Ishida J."/>
            <person name="Satou M."/>
            <person name="Sakurai T."/>
            <person name="Nakajima M."/>
            <person name="Enju A."/>
            <person name="Akiyama K."/>
            <person name="Oono Y."/>
            <person name="Muramatsu M."/>
            <person name="Hayashizaki Y."/>
            <person name="Kawai J."/>
            <person name="Carninci P."/>
            <person name="Itoh M."/>
            <person name="Ishii Y."/>
            <person name="Arakawa T."/>
            <person name="Shibata K."/>
            <person name="Shinagawa A."/>
            <person name="Shinozaki K."/>
        </authorList>
    </citation>
    <scope>NUCLEOTIDE SEQUENCE [LARGE SCALE MRNA]</scope>
    <source>
        <strain>cv. Columbia</strain>
    </source>
</reference>
<reference key="4">
    <citation type="journal article" date="2009" name="Plant Physiol.">
        <title>Large-scale Arabidopsis phosphoproteome profiling reveals novel chloroplast kinase substrates and phosphorylation networks.</title>
        <authorList>
            <person name="Reiland S."/>
            <person name="Messerli G."/>
            <person name="Baerenfaller K."/>
            <person name="Gerrits B."/>
            <person name="Endler A."/>
            <person name="Grossmann J."/>
            <person name="Gruissem W."/>
            <person name="Baginsky S."/>
        </authorList>
    </citation>
    <scope>IDENTIFICATION BY MASS SPECTROMETRY [LARGE SCALE ANALYSIS]</scope>
</reference>
<reference key="5">
    <citation type="journal article" date="2010" name="Cell Host Microbe">
        <title>Receptor-like cytoplasmic kinases integrate signaling from multiple plant immune receptors and are targeted by a Pseudomonas syringae effector.</title>
        <authorList>
            <person name="Zhang J."/>
            <person name="Li W."/>
            <person name="Xiang T."/>
            <person name="Liu Z."/>
            <person name="Laluk K."/>
            <person name="Ding X."/>
            <person name="Zou Y."/>
            <person name="Gao M."/>
            <person name="Zhang X."/>
            <person name="Chen S."/>
            <person name="Mengiste T."/>
            <person name="Zhang Y."/>
            <person name="Zhou J.M."/>
        </authorList>
    </citation>
    <scope>GENE FAMILY</scope>
    <scope>NOMENCLATURE</scope>
</reference>
<reference key="6">
    <citation type="journal article" date="2013" name="PLoS ONE">
        <title>xopAC-triggered immunity against Xanthomonas depends on Arabidopsis receptor-like cytoplasmic kinase genes PBL2 and RIPK.</title>
        <authorList>
            <person name="Guy E."/>
            <person name="Lautier M."/>
            <person name="Chabannes M."/>
            <person name="Roux B."/>
            <person name="Lauber E."/>
            <person name="Arlat M."/>
            <person name="Noel L.D."/>
        </authorList>
    </citation>
    <scope>INTERACTION WITH XANTHOMONAS CAMPESTRIS XOPAC/AVRAC</scope>
</reference>
<name>PBL8_ARATH</name>
<gene>
    <name evidence="6" type="primary">PBL8</name>
    <name evidence="7" type="synonym">PIX17</name>
    <name type="ordered locus">At5g01020</name>
    <name type="ORF">F7J8.5</name>
</gene>
<accession>Q8GXZ3</accession>
<accession>Q9LFD4</accession>
<dbReference type="EC" id="2.7.11.1" evidence="8"/>
<dbReference type="EMBL" id="AL137189">
    <property type="protein sequence ID" value="CAB99493.1"/>
    <property type="status" value="ALT_SEQ"/>
    <property type="molecule type" value="Genomic_DNA"/>
</dbReference>
<dbReference type="EMBL" id="CP002688">
    <property type="protein sequence ID" value="AED90288.1"/>
    <property type="molecule type" value="Genomic_DNA"/>
</dbReference>
<dbReference type="EMBL" id="AK117952">
    <property type="protein sequence ID" value="BAC42590.1"/>
    <property type="molecule type" value="mRNA"/>
</dbReference>
<dbReference type="RefSeq" id="NP_195722.2">
    <property type="nucleotide sequence ID" value="NM_120179.3"/>
</dbReference>
<dbReference type="SMR" id="Q8GXZ3"/>
<dbReference type="FunCoup" id="Q8GXZ3">
    <property type="interactions" value="3950"/>
</dbReference>
<dbReference type="STRING" id="3702.Q8GXZ3"/>
<dbReference type="iPTMnet" id="Q8GXZ3"/>
<dbReference type="PaxDb" id="3702-AT5G01020.1"/>
<dbReference type="ProteomicsDB" id="236331"/>
<dbReference type="EnsemblPlants" id="AT5G01020.1">
    <property type="protein sequence ID" value="AT5G01020.1"/>
    <property type="gene ID" value="AT5G01020"/>
</dbReference>
<dbReference type="GeneID" id="831918"/>
<dbReference type="Gramene" id="AT5G01020.1">
    <property type="protein sequence ID" value="AT5G01020.1"/>
    <property type="gene ID" value="AT5G01020"/>
</dbReference>
<dbReference type="KEGG" id="ath:AT5G01020"/>
<dbReference type="Araport" id="AT5G01020"/>
<dbReference type="TAIR" id="AT5G01020">
    <property type="gene designation" value="PBL8"/>
</dbReference>
<dbReference type="eggNOG" id="KOG1187">
    <property type="taxonomic scope" value="Eukaryota"/>
</dbReference>
<dbReference type="HOGENOM" id="CLU_000288_21_1_1"/>
<dbReference type="InParanoid" id="Q8GXZ3"/>
<dbReference type="OMA" id="PSVHKMY"/>
<dbReference type="PhylomeDB" id="Q8GXZ3"/>
<dbReference type="PRO" id="PR:Q8GXZ3"/>
<dbReference type="Proteomes" id="UP000006548">
    <property type="component" value="Chromosome 5"/>
</dbReference>
<dbReference type="ExpressionAtlas" id="Q8GXZ3">
    <property type="expression patterns" value="baseline and differential"/>
</dbReference>
<dbReference type="GO" id="GO:0005886">
    <property type="term" value="C:plasma membrane"/>
    <property type="evidence" value="ECO:0007669"/>
    <property type="project" value="UniProtKB-SubCell"/>
</dbReference>
<dbReference type="GO" id="GO:0005524">
    <property type="term" value="F:ATP binding"/>
    <property type="evidence" value="ECO:0007669"/>
    <property type="project" value="UniProtKB-KW"/>
</dbReference>
<dbReference type="GO" id="GO:0106310">
    <property type="term" value="F:protein serine kinase activity"/>
    <property type="evidence" value="ECO:0007669"/>
    <property type="project" value="RHEA"/>
</dbReference>
<dbReference type="GO" id="GO:0004674">
    <property type="term" value="F:protein serine/threonine kinase activity"/>
    <property type="evidence" value="ECO:0007669"/>
    <property type="project" value="UniProtKB-KW"/>
</dbReference>
<dbReference type="GO" id="GO:0006952">
    <property type="term" value="P:defense response"/>
    <property type="evidence" value="ECO:0007669"/>
    <property type="project" value="UniProtKB-KW"/>
</dbReference>
<dbReference type="CDD" id="cd14066">
    <property type="entry name" value="STKc_IRAK"/>
    <property type="match status" value="1"/>
</dbReference>
<dbReference type="FunFam" id="1.10.510.10:FF:000258">
    <property type="entry name" value="Probable serine/threonine-protein kinase PBL8"/>
    <property type="match status" value="1"/>
</dbReference>
<dbReference type="FunFam" id="3.30.200.20:FF:000228">
    <property type="entry name" value="Serine/threonine-protein kinase BIK1"/>
    <property type="match status" value="1"/>
</dbReference>
<dbReference type="Gene3D" id="3.30.200.20">
    <property type="entry name" value="Phosphorylase Kinase, domain 1"/>
    <property type="match status" value="1"/>
</dbReference>
<dbReference type="Gene3D" id="1.10.510.10">
    <property type="entry name" value="Transferase(Phosphotransferase) domain 1"/>
    <property type="match status" value="1"/>
</dbReference>
<dbReference type="InterPro" id="IPR011009">
    <property type="entry name" value="Kinase-like_dom_sf"/>
</dbReference>
<dbReference type="InterPro" id="IPR050823">
    <property type="entry name" value="Plant_Ser_Thr_Prot_Kinase"/>
</dbReference>
<dbReference type="InterPro" id="IPR000719">
    <property type="entry name" value="Prot_kinase_dom"/>
</dbReference>
<dbReference type="InterPro" id="IPR017441">
    <property type="entry name" value="Protein_kinase_ATP_BS"/>
</dbReference>
<dbReference type="InterPro" id="IPR001245">
    <property type="entry name" value="Ser-Thr/Tyr_kinase_cat_dom"/>
</dbReference>
<dbReference type="InterPro" id="IPR008271">
    <property type="entry name" value="Ser/Thr_kinase_AS"/>
</dbReference>
<dbReference type="PANTHER" id="PTHR45621">
    <property type="entry name" value="OS01G0588500 PROTEIN-RELATED"/>
    <property type="match status" value="1"/>
</dbReference>
<dbReference type="Pfam" id="PF07714">
    <property type="entry name" value="PK_Tyr_Ser-Thr"/>
    <property type="match status" value="1"/>
</dbReference>
<dbReference type="SUPFAM" id="SSF56112">
    <property type="entry name" value="Protein kinase-like (PK-like)"/>
    <property type="match status" value="1"/>
</dbReference>
<dbReference type="PROSITE" id="PS00107">
    <property type="entry name" value="PROTEIN_KINASE_ATP"/>
    <property type="match status" value="1"/>
</dbReference>
<dbReference type="PROSITE" id="PS50011">
    <property type="entry name" value="PROTEIN_KINASE_DOM"/>
    <property type="match status" value="1"/>
</dbReference>
<dbReference type="PROSITE" id="PS00108">
    <property type="entry name" value="PROTEIN_KINASE_ST"/>
    <property type="match status" value="1"/>
</dbReference>
<proteinExistence type="evidence at protein level"/>
<feature type="initiator methionine" description="Removed" evidence="8">
    <location>
        <position position="1"/>
    </location>
</feature>
<feature type="chain" id="PRO_0000403345" description="Probable serine/threonine-protein kinase PBL8">
    <location>
        <begin position="2"/>
        <end position="410"/>
    </location>
</feature>
<feature type="domain" description="Protein kinase" evidence="3">
    <location>
        <begin position="69"/>
        <end position="350"/>
    </location>
</feature>
<feature type="region of interest" description="Disordered" evidence="4">
    <location>
        <begin position="1"/>
        <end position="45"/>
    </location>
</feature>
<feature type="compositionally biased region" description="Basic and acidic residues" evidence="4">
    <location>
        <begin position="1"/>
        <end position="10"/>
    </location>
</feature>
<feature type="active site" description="Proton acceptor" evidence="3">
    <location>
        <position position="199"/>
    </location>
</feature>
<feature type="binding site" evidence="3">
    <location>
        <begin position="75"/>
        <end position="83"/>
    </location>
    <ligand>
        <name>ATP</name>
        <dbReference type="ChEBI" id="CHEBI:30616"/>
    </ligand>
</feature>
<feature type="binding site" evidence="3">
    <location>
        <position position="104"/>
    </location>
    <ligand>
        <name>ATP</name>
        <dbReference type="ChEBI" id="CHEBI:30616"/>
    </ligand>
</feature>
<feature type="modified residue" description="Phosphothreonine" evidence="1">
    <location>
        <position position="58"/>
    </location>
</feature>
<feature type="modified residue" description="Phosphotyrosine" evidence="1">
    <location>
        <position position="149"/>
    </location>
</feature>
<feature type="modified residue" description="Phosphoserine" evidence="1">
    <location>
        <position position="203"/>
    </location>
</feature>
<feature type="modified residue" description="Phosphoserine" evidence="1">
    <location>
        <position position="233"/>
    </location>
</feature>
<feature type="modified residue" description="Phosphothreonine" evidence="1">
    <location>
        <position position="234"/>
    </location>
</feature>
<feature type="modified residue" description="Phosphothreonine" evidence="1">
    <location>
        <position position="239"/>
    </location>
</feature>
<feature type="modified residue" description="Phosphotyrosine" evidence="1">
    <location>
        <position position="247"/>
    </location>
</feature>
<feature type="lipid moiety-binding region" description="N-myristoyl glycine" evidence="2">
    <location>
        <position position="2"/>
    </location>
</feature>
<feature type="lipid moiety-binding region" description="S-palmitoyl cysteine" evidence="2">
    <location>
        <position position="4"/>
    </location>
</feature>
<keyword id="KW-0067">ATP-binding</keyword>
<keyword id="KW-1003">Cell membrane</keyword>
<keyword id="KW-0418">Kinase</keyword>
<keyword id="KW-0449">Lipoprotein</keyword>
<keyword id="KW-0472">Membrane</keyword>
<keyword id="KW-0519">Myristate</keyword>
<keyword id="KW-0547">Nucleotide-binding</keyword>
<keyword id="KW-0564">Palmitate</keyword>
<keyword id="KW-0597">Phosphoprotein</keyword>
<keyword id="KW-0611">Plant defense</keyword>
<keyword id="KW-1185">Reference proteome</keyword>
<keyword id="KW-0723">Serine/threonine-protein kinase</keyword>
<keyword id="KW-0808">Transferase</keyword>
<evidence type="ECO:0000250" key="1">
    <source>
        <dbReference type="UniProtKB" id="O48814"/>
    </source>
</evidence>
<evidence type="ECO:0000250" key="2">
    <source>
        <dbReference type="UniProtKB" id="Q9FE20"/>
    </source>
</evidence>
<evidence type="ECO:0000255" key="3">
    <source>
        <dbReference type="PROSITE-ProRule" id="PRU00159"/>
    </source>
</evidence>
<evidence type="ECO:0000256" key="4">
    <source>
        <dbReference type="SAM" id="MobiDB-lite"/>
    </source>
</evidence>
<evidence type="ECO:0000269" key="5">
    <source>
    </source>
</evidence>
<evidence type="ECO:0000303" key="6">
    <source>
    </source>
</evidence>
<evidence type="ECO:0000303" key="7">
    <source>
    </source>
</evidence>
<evidence type="ECO:0000305" key="8"/>